<protein>
    <recommendedName>
        <fullName>Thioredoxin O, mitochondrial</fullName>
        <shortName>OsTrxo1</shortName>
    </recommendedName>
    <alternativeName>
        <fullName>OsTrx22</fullName>
    </alternativeName>
</protein>
<dbReference type="EMBL" id="AP003628">
    <property type="protein sequence ID" value="BAD45394.1"/>
    <property type="status" value="ALT_SEQ"/>
    <property type="molecule type" value="Genomic_DNA"/>
</dbReference>
<dbReference type="EMBL" id="AP003633">
    <property type="protein sequence ID" value="BAD45397.1"/>
    <property type="status" value="ALT_SEQ"/>
    <property type="molecule type" value="Genomic_DNA"/>
</dbReference>
<dbReference type="EMBL" id="AP008212">
    <property type="protein sequence ID" value="BAH93672.1"/>
    <property type="status" value="ALT_SEQ"/>
    <property type="molecule type" value="Genomic_DNA"/>
</dbReference>
<dbReference type="EMBL" id="AP014962">
    <property type="protein sequence ID" value="BAS99033.1"/>
    <property type="molecule type" value="Genomic_DNA"/>
</dbReference>
<dbReference type="EMBL" id="CM000143">
    <property type="protein sequence ID" value="EEE66181.1"/>
    <property type="status" value="ALT_SEQ"/>
    <property type="molecule type" value="Genomic_DNA"/>
</dbReference>
<dbReference type="RefSeq" id="XP_015641364.1">
    <property type="nucleotide sequence ID" value="XM_015785878.1"/>
</dbReference>
<dbReference type="RefSeq" id="XP_015641365.1">
    <property type="nucleotide sequence ID" value="XM_015785879.1"/>
</dbReference>
<dbReference type="SMR" id="Q655X0"/>
<dbReference type="FunCoup" id="Q655X0">
    <property type="interactions" value="518"/>
</dbReference>
<dbReference type="STRING" id="39947.Q655X0"/>
<dbReference type="PaxDb" id="39947-Q655X0"/>
<dbReference type="EnsemblPlants" id="Os06t0665900-00">
    <property type="protein sequence ID" value="Os06t0665900-00"/>
    <property type="gene ID" value="Os06g0665900"/>
</dbReference>
<dbReference type="Gramene" id="Os06t0665900-00">
    <property type="protein sequence ID" value="Os06t0665900-00"/>
    <property type="gene ID" value="Os06g0665900"/>
</dbReference>
<dbReference type="KEGG" id="dosa:Os06g0665900"/>
<dbReference type="eggNOG" id="KOG0907">
    <property type="taxonomic scope" value="Eukaryota"/>
</dbReference>
<dbReference type="HOGENOM" id="CLU_090389_6_0_1"/>
<dbReference type="InParanoid" id="Q655X0"/>
<dbReference type="OMA" id="HAVFYFT"/>
<dbReference type="OrthoDB" id="2121326at2759"/>
<dbReference type="Proteomes" id="UP000000763">
    <property type="component" value="Chromosome 6"/>
</dbReference>
<dbReference type="Proteomes" id="UP000007752">
    <property type="component" value="Chromosome 6"/>
</dbReference>
<dbReference type="Proteomes" id="UP000059680">
    <property type="component" value="Chromosome 6"/>
</dbReference>
<dbReference type="GO" id="GO:0005739">
    <property type="term" value="C:mitochondrion"/>
    <property type="evidence" value="ECO:0007669"/>
    <property type="project" value="UniProtKB-SubCell"/>
</dbReference>
<dbReference type="CDD" id="cd02947">
    <property type="entry name" value="TRX_family"/>
    <property type="match status" value="1"/>
</dbReference>
<dbReference type="FunFam" id="3.40.30.10:FF:000245">
    <property type="entry name" value="Thioredoxin"/>
    <property type="match status" value="1"/>
</dbReference>
<dbReference type="Gene3D" id="3.40.30.10">
    <property type="entry name" value="Glutaredoxin"/>
    <property type="match status" value="1"/>
</dbReference>
<dbReference type="InterPro" id="IPR036249">
    <property type="entry name" value="Thioredoxin-like_sf"/>
</dbReference>
<dbReference type="InterPro" id="IPR013766">
    <property type="entry name" value="Thioredoxin_domain"/>
</dbReference>
<dbReference type="PANTHER" id="PTHR46115">
    <property type="entry name" value="THIOREDOXIN-LIKE PROTEIN 1"/>
    <property type="match status" value="1"/>
</dbReference>
<dbReference type="Pfam" id="PF00085">
    <property type="entry name" value="Thioredoxin"/>
    <property type="match status" value="1"/>
</dbReference>
<dbReference type="SUPFAM" id="SSF52833">
    <property type="entry name" value="Thioredoxin-like"/>
    <property type="match status" value="1"/>
</dbReference>
<dbReference type="PROSITE" id="PS51352">
    <property type="entry name" value="THIOREDOXIN_2"/>
    <property type="match status" value="1"/>
</dbReference>
<reference key="1">
    <citation type="journal article" date="2005" name="Nature">
        <title>The map-based sequence of the rice genome.</title>
        <authorList>
            <consortium name="International rice genome sequencing project (IRGSP)"/>
        </authorList>
    </citation>
    <scope>NUCLEOTIDE SEQUENCE [LARGE SCALE GENOMIC DNA]</scope>
    <source>
        <strain>cv. Nipponbare</strain>
    </source>
</reference>
<reference key="2">
    <citation type="journal article" date="2008" name="Nucleic Acids Res.">
        <title>The rice annotation project database (RAP-DB): 2008 update.</title>
        <authorList>
            <consortium name="The rice annotation project (RAP)"/>
        </authorList>
    </citation>
    <scope>GENOME REANNOTATION</scope>
    <source>
        <strain>cv. Nipponbare</strain>
    </source>
</reference>
<reference key="3">
    <citation type="journal article" date="2013" name="Rice">
        <title>Improvement of the Oryza sativa Nipponbare reference genome using next generation sequence and optical map data.</title>
        <authorList>
            <person name="Kawahara Y."/>
            <person name="de la Bastide M."/>
            <person name="Hamilton J.P."/>
            <person name="Kanamori H."/>
            <person name="McCombie W.R."/>
            <person name="Ouyang S."/>
            <person name="Schwartz D.C."/>
            <person name="Tanaka T."/>
            <person name="Wu J."/>
            <person name="Zhou S."/>
            <person name="Childs K.L."/>
            <person name="Davidson R.M."/>
            <person name="Lin H."/>
            <person name="Quesada-Ocampo L."/>
            <person name="Vaillancourt B."/>
            <person name="Sakai H."/>
            <person name="Lee S.S."/>
            <person name="Kim J."/>
            <person name="Numa H."/>
            <person name="Itoh T."/>
            <person name="Buell C.R."/>
            <person name="Matsumoto T."/>
        </authorList>
    </citation>
    <scope>GENOME REANNOTATION</scope>
    <source>
        <strain>cv. Nipponbare</strain>
    </source>
</reference>
<reference key="4">
    <citation type="journal article" date="2005" name="PLoS Biol.">
        <title>The genomes of Oryza sativa: a history of duplications.</title>
        <authorList>
            <person name="Yu J."/>
            <person name="Wang J."/>
            <person name="Lin W."/>
            <person name="Li S."/>
            <person name="Li H."/>
            <person name="Zhou J."/>
            <person name="Ni P."/>
            <person name="Dong W."/>
            <person name="Hu S."/>
            <person name="Zeng C."/>
            <person name="Zhang J."/>
            <person name="Zhang Y."/>
            <person name="Li R."/>
            <person name="Xu Z."/>
            <person name="Li S."/>
            <person name="Li X."/>
            <person name="Zheng H."/>
            <person name="Cong L."/>
            <person name="Lin L."/>
            <person name="Yin J."/>
            <person name="Geng J."/>
            <person name="Li G."/>
            <person name="Shi J."/>
            <person name="Liu J."/>
            <person name="Lv H."/>
            <person name="Li J."/>
            <person name="Wang J."/>
            <person name="Deng Y."/>
            <person name="Ran L."/>
            <person name="Shi X."/>
            <person name="Wang X."/>
            <person name="Wu Q."/>
            <person name="Li C."/>
            <person name="Ren X."/>
            <person name="Wang J."/>
            <person name="Wang X."/>
            <person name="Li D."/>
            <person name="Liu D."/>
            <person name="Zhang X."/>
            <person name="Ji Z."/>
            <person name="Zhao W."/>
            <person name="Sun Y."/>
            <person name="Zhang Z."/>
            <person name="Bao J."/>
            <person name="Han Y."/>
            <person name="Dong L."/>
            <person name="Ji J."/>
            <person name="Chen P."/>
            <person name="Wu S."/>
            <person name="Liu J."/>
            <person name="Xiao Y."/>
            <person name="Bu D."/>
            <person name="Tan J."/>
            <person name="Yang L."/>
            <person name="Ye C."/>
            <person name="Zhang J."/>
            <person name="Xu J."/>
            <person name="Zhou Y."/>
            <person name="Yu Y."/>
            <person name="Zhang B."/>
            <person name="Zhuang S."/>
            <person name="Wei H."/>
            <person name="Liu B."/>
            <person name="Lei M."/>
            <person name="Yu H."/>
            <person name="Li Y."/>
            <person name="Xu H."/>
            <person name="Wei S."/>
            <person name="He X."/>
            <person name="Fang L."/>
            <person name="Zhang Z."/>
            <person name="Zhang Y."/>
            <person name="Huang X."/>
            <person name="Su Z."/>
            <person name="Tong W."/>
            <person name="Li J."/>
            <person name="Tong Z."/>
            <person name="Li S."/>
            <person name="Ye J."/>
            <person name="Wang L."/>
            <person name="Fang L."/>
            <person name="Lei T."/>
            <person name="Chen C.-S."/>
            <person name="Chen H.-C."/>
            <person name="Xu Z."/>
            <person name="Li H."/>
            <person name="Huang H."/>
            <person name="Zhang F."/>
            <person name="Xu H."/>
            <person name="Li N."/>
            <person name="Zhao C."/>
            <person name="Li S."/>
            <person name="Dong L."/>
            <person name="Huang Y."/>
            <person name="Li L."/>
            <person name="Xi Y."/>
            <person name="Qi Q."/>
            <person name="Li W."/>
            <person name="Zhang B."/>
            <person name="Hu W."/>
            <person name="Zhang Y."/>
            <person name="Tian X."/>
            <person name="Jiao Y."/>
            <person name="Liang X."/>
            <person name="Jin J."/>
            <person name="Gao L."/>
            <person name="Zheng W."/>
            <person name="Hao B."/>
            <person name="Liu S.-M."/>
            <person name="Wang W."/>
            <person name="Yuan L."/>
            <person name="Cao M."/>
            <person name="McDermott J."/>
            <person name="Samudrala R."/>
            <person name="Wang J."/>
            <person name="Wong G.K.-S."/>
            <person name="Yang H."/>
        </authorList>
    </citation>
    <scope>NUCLEOTIDE SEQUENCE [LARGE SCALE GENOMIC DNA]</scope>
    <source>
        <strain>cv. Nipponbare</strain>
    </source>
</reference>
<reference key="5">
    <citation type="journal article" date="2009" name="Mol. Plant">
        <title>Comparative genomic study of the thioredoxin family in photosynthetic organisms with emphasis on Populus trichocarpa.</title>
        <authorList>
            <person name="Chibani K."/>
            <person name="Wingsle G."/>
            <person name="Jacquot J.P."/>
            <person name="Gelhaye E."/>
            <person name="Rouhier N."/>
        </authorList>
    </citation>
    <scope>GENE FAMILY</scope>
    <scope>NOMENCLATURE</scope>
</reference>
<keyword id="KW-1015">Disulfide bond</keyword>
<keyword id="KW-0249">Electron transport</keyword>
<keyword id="KW-0496">Mitochondrion</keyword>
<keyword id="KW-0676">Redox-active center</keyword>
<keyword id="KW-1185">Reference proteome</keyword>
<keyword id="KW-0809">Transit peptide</keyword>
<keyword id="KW-0813">Transport</keyword>
<organism>
    <name type="scientific">Oryza sativa subsp. japonica</name>
    <name type="common">Rice</name>
    <dbReference type="NCBI Taxonomy" id="39947"/>
    <lineage>
        <taxon>Eukaryota</taxon>
        <taxon>Viridiplantae</taxon>
        <taxon>Streptophyta</taxon>
        <taxon>Embryophyta</taxon>
        <taxon>Tracheophyta</taxon>
        <taxon>Spermatophyta</taxon>
        <taxon>Magnoliopsida</taxon>
        <taxon>Liliopsida</taxon>
        <taxon>Poales</taxon>
        <taxon>Poaceae</taxon>
        <taxon>BOP clade</taxon>
        <taxon>Oryzoideae</taxon>
        <taxon>Oryzeae</taxon>
        <taxon>Oryzinae</taxon>
        <taxon>Oryza</taxon>
        <taxon>Oryza sativa</taxon>
    </lineage>
</organism>
<accession>Q655X0</accession>
<accession>A0A0N7KMK0</accession>
<accession>B9FQD9</accession>
<accession>C7J4A5</accession>
<feature type="transit peptide" description="Mitochondrion" evidence="2">
    <location>
        <begin position="1"/>
        <end position="59"/>
    </location>
</feature>
<feature type="chain" id="PRO_0000394834" description="Thioredoxin O, mitochondrial">
    <location>
        <begin position="60"/>
        <end position="174"/>
    </location>
</feature>
<feature type="domain" description="Thioredoxin" evidence="3">
    <location>
        <begin position="60"/>
        <end position="172"/>
    </location>
</feature>
<feature type="active site" description="Nucleophile" evidence="1">
    <location>
        <position position="96"/>
    </location>
</feature>
<feature type="active site" description="Nucleophile" evidence="1">
    <location>
        <position position="99"/>
    </location>
</feature>
<feature type="site" description="Contributes to redox potential value" evidence="1">
    <location>
        <position position="97"/>
    </location>
</feature>
<feature type="site" description="Contributes to redox potential value" evidence="1">
    <location>
        <position position="98"/>
    </location>
</feature>
<feature type="disulfide bond" description="Redox-active" evidence="3">
    <location>
        <begin position="96"/>
        <end position="99"/>
    </location>
</feature>
<gene>
    <name type="ordered locus">Os06g0665900</name>
    <name type="ordered locus">LOC_Os06g45510</name>
    <name type="ORF">OsJ_22283</name>
    <name type="ORF">P0473H04.30</name>
    <name type="ORF">P0637D03.1</name>
</gene>
<name>TRXO_ORYSJ</name>
<evidence type="ECO:0000250" key="1"/>
<evidence type="ECO:0000255" key="2"/>
<evidence type="ECO:0000255" key="3">
    <source>
        <dbReference type="PROSITE-ProRule" id="PRU00691"/>
    </source>
</evidence>
<evidence type="ECO:0000305" key="4"/>
<proteinExistence type="evidence at transcript level"/>
<comment type="function">
    <text>Probable thiol-disulfide oxidoreductase that may participate in various redox reactions.</text>
</comment>
<comment type="subcellular location">
    <subcellularLocation>
        <location evidence="4">Mitochondrion</location>
    </subcellularLocation>
</comment>
<comment type="similarity">
    <text evidence="4">Belongs to the thioredoxin family. Plant O-type subfamily.</text>
</comment>
<comment type="sequence caution" evidence="4">
    <conflict type="erroneous gene model prediction">
        <sequence resource="EMBL-CDS" id="BAD45394"/>
    </conflict>
</comment>
<comment type="sequence caution" evidence="4">
    <conflict type="erroneous gene model prediction">
        <sequence resource="EMBL-CDS" id="BAD45397"/>
    </conflict>
</comment>
<comment type="sequence caution" evidence="4">
    <conflict type="erroneous gene model prediction">
        <sequence resource="EMBL-CDS" id="BAH93672"/>
    </conflict>
</comment>
<comment type="sequence caution" evidence="4">
    <conflict type="erroneous gene model prediction">
        <sequence resource="EMBL-CDS" id="EEE66181"/>
    </conflict>
</comment>
<sequence>MALAHRLCRLPRLLPLAAAAAASKPYLPGKPSPAPPPPLSSPPPFPSLSRLFSTTPSSSGDSSMVVVGSAESFTSIMSKVEAEKLPAVFYYTAVWCGPCRAMAPVISKLSSRYPKIPIYKVDIDMDGVGSKLSDLKIFSVPTFHFYYQGRKTGEVVGANATKLESTMESLHKQL</sequence>